<dbReference type="EMBL" id="AF422915">
    <property type="protein sequence ID" value="AAN31453.1"/>
    <property type="molecule type" value="Genomic_DNA"/>
</dbReference>
<dbReference type="GO" id="GO:0005743">
    <property type="term" value="C:mitochondrial inner membrane"/>
    <property type="evidence" value="ECO:0007669"/>
    <property type="project" value="UniProtKB-SubCell"/>
</dbReference>
<dbReference type="GO" id="GO:0045275">
    <property type="term" value="C:respiratory chain complex III"/>
    <property type="evidence" value="ECO:0007669"/>
    <property type="project" value="InterPro"/>
</dbReference>
<dbReference type="GO" id="GO:0046872">
    <property type="term" value="F:metal ion binding"/>
    <property type="evidence" value="ECO:0007669"/>
    <property type="project" value="UniProtKB-KW"/>
</dbReference>
<dbReference type="GO" id="GO:0008121">
    <property type="term" value="F:ubiquinol-cytochrome-c reductase activity"/>
    <property type="evidence" value="ECO:0007669"/>
    <property type="project" value="InterPro"/>
</dbReference>
<dbReference type="GO" id="GO:0006122">
    <property type="term" value="P:mitochondrial electron transport, ubiquinol to cytochrome c"/>
    <property type="evidence" value="ECO:0007669"/>
    <property type="project" value="TreeGrafter"/>
</dbReference>
<dbReference type="CDD" id="cd00290">
    <property type="entry name" value="cytochrome_b_C"/>
    <property type="match status" value="1"/>
</dbReference>
<dbReference type="CDD" id="cd00284">
    <property type="entry name" value="Cytochrome_b_N"/>
    <property type="match status" value="1"/>
</dbReference>
<dbReference type="FunFam" id="1.20.810.10:FF:000002">
    <property type="entry name" value="Cytochrome b"/>
    <property type="match status" value="1"/>
</dbReference>
<dbReference type="Gene3D" id="1.20.810.10">
    <property type="entry name" value="Cytochrome Bc1 Complex, Chain C"/>
    <property type="match status" value="1"/>
</dbReference>
<dbReference type="InterPro" id="IPR005798">
    <property type="entry name" value="Cyt_b/b6_C"/>
</dbReference>
<dbReference type="InterPro" id="IPR036150">
    <property type="entry name" value="Cyt_b/b6_C_sf"/>
</dbReference>
<dbReference type="InterPro" id="IPR005797">
    <property type="entry name" value="Cyt_b/b6_N"/>
</dbReference>
<dbReference type="InterPro" id="IPR027387">
    <property type="entry name" value="Cytb/b6-like_sf"/>
</dbReference>
<dbReference type="InterPro" id="IPR030689">
    <property type="entry name" value="Cytochrome_b"/>
</dbReference>
<dbReference type="InterPro" id="IPR048260">
    <property type="entry name" value="Cytochrome_b_C_euk/bac"/>
</dbReference>
<dbReference type="InterPro" id="IPR048259">
    <property type="entry name" value="Cytochrome_b_N_euk/bac"/>
</dbReference>
<dbReference type="InterPro" id="IPR016174">
    <property type="entry name" value="Di-haem_cyt_TM"/>
</dbReference>
<dbReference type="PANTHER" id="PTHR19271">
    <property type="entry name" value="CYTOCHROME B"/>
    <property type="match status" value="1"/>
</dbReference>
<dbReference type="PANTHER" id="PTHR19271:SF16">
    <property type="entry name" value="CYTOCHROME B"/>
    <property type="match status" value="1"/>
</dbReference>
<dbReference type="Pfam" id="PF00032">
    <property type="entry name" value="Cytochrom_B_C"/>
    <property type="match status" value="1"/>
</dbReference>
<dbReference type="Pfam" id="PF00033">
    <property type="entry name" value="Cytochrome_B"/>
    <property type="match status" value="1"/>
</dbReference>
<dbReference type="PIRSF" id="PIRSF038885">
    <property type="entry name" value="COB"/>
    <property type="match status" value="1"/>
</dbReference>
<dbReference type="SUPFAM" id="SSF81648">
    <property type="entry name" value="a domain/subunit of cytochrome bc1 complex (Ubiquinol-cytochrome c reductase)"/>
    <property type="match status" value="1"/>
</dbReference>
<dbReference type="SUPFAM" id="SSF81342">
    <property type="entry name" value="Transmembrane di-heme cytochromes"/>
    <property type="match status" value="1"/>
</dbReference>
<dbReference type="PROSITE" id="PS51003">
    <property type="entry name" value="CYTB_CTER"/>
    <property type="match status" value="1"/>
</dbReference>
<dbReference type="PROSITE" id="PS51002">
    <property type="entry name" value="CYTB_NTER"/>
    <property type="match status" value="1"/>
</dbReference>
<geneLocation type="mitochondrion"/>
<name>CYB_CAPPI</name>
<accession>Q8HD60</accession>
<gene>
    <name type="primary">MT-CYB</name>
    <name type="synonym">COB</name>
    <name type="synonym">CYTB</name>
    <name type="synonym">MTCYB</name>
</gene>
<reference key="1">
    <citation type="journal article" date="2002" name="Mol. Phylogenet. Evol.">
        <title>Evolution of South American spiny rats (Rodentia, Echimyidae): the star-phylogeny hypothesis revisited.</title>
        <authorList>
            <person name="Leite Y.L.R."/>
            <person name="Patton J.L."/>
        </authorList>
    </citation>
    <scope>NUCLEOTIDE SEQUENCE [GENOMIC DNA]</scope>
</reference>
<organism>
    <name type="scientific">Capromys pilorides</name>
    <name type="common">Desmarest's hutia</name>
    <name type="synonym">Isodon pilorides</name>
    <dbReference type="NCBI Taxonomy" id="34842"/>
    <lineage>
        <taxon>Eukaryota</taxon>
        <taxon>Metazoa</taxon>
        <taxon>Chordata</taxon>
        <taxon>Craniata</taxon>
        <taxon>Vertebrata</taxon>
        <taxon>Euteleostomi</taxon>
        <taxon>Mammalia</taxon>
        <taxon>Eutheria</taxon>
        <taxon>Euarchontoglires</taxon>
        <taxon>Glires</taxon>
        <taxon>Rodentia</taxon>
        <taxon>Hystricomorpha</taxon>
        <taxon>Capromyidae</taxon>
        <taxon>Capromys</taxon>
    </lineage>
</organism>
<evidence type="ECO:0000250" key="1"/>
<evidence type="ECO:0000250" key="2">
    <source>
        <dbReference type="UniProtKB" id="P00157"/>
    </source>
</evidence>
<evidence type="ECO:0000255" key="3">
    <source>
        <dbReference type="PROSITE-ProRule" id="PRU00967"/>
    </source>
</evidence>
<evidence type="ECO:0000255" key="4">
    <source>
        <dbReference type="PROSITE-ProRule" id="PRU00968"/>
    </source>
</evidence>
<keyword id="KW-0249">Electron transport</keyword>
<keyword id="KW-0349">Heme</keyword>
<keyword id="KW-0408">Iron</keyword>
<keyword id="KW-0472">Membrane</keyword>
<keyword id="KW-0479">Metal-binding</keyword>
<keyword id="KW-0496">Mitochondrion</keyword>
<keyword id="KW-0999">Mitochondrion inner membrane</keyword>
<keyword id="KW-0679">Respiratory chain</keyword>
<keyword id="KW-0812">Transmembrane</keyword>
<keyword id="KW-1133">Transmembrane helix</keyword>
<keyword id="KW-0813">Transport</keyword>
<keyword id="KW-0830">Ubiquinone</keyword>
<comment type="function">
    <text evidence="2">Component of the ubiquinol-cytochrome c reductase complex (complex III or cytochrome b-c1 complex) that is part of the mitochondrial respiratory chain. The b-c1 complex mediates electron transfer from ubiquinol to cytochrome c. Contributes to the generation of a proton gradient across the mitochondrial membrane that is then used for ATP synthesis.</text>
</comment>
<comment type="cofactor">
    <cofactor evidence="2">
        <name>heme b</name>
        <dbReference type="ChEBI" id="CHEBI:60344"/>
    </cofactor>
    <text evidence="2">Binds 2 heme b groups non-covalently.</text>
</comment>
<comment type="subunit">
    <text evidence="2">The cytochrome bc1 complex contains 11 subunits: 3 respiratory subunits (MT-CYB, CYC1 and UQCRFS1), 2 core proteins (UQCRC1 and UQCRC2) and 6 low-molecular weight proteins (UQCRH/QCR6, UQCRB/QCR7, UQCRQ/QCR8, UQCR10/QCR9, UQCR11/QCR10 and a cleavage product of UQCRFS1). This cytochrome bc1 complex then forms a dimer.</text>
</comment>
<comment type="subcellular location">
    <subcellularLocation>
        <location evidence="2">Mitochondrion inner membrane</location>
        <topology evidence="2">Multi-pass membrane protein</topology>
    </subcellularLocation>
</comment>
<comment type="miscellaneous">
    <text evidence="1">Heme 1 (or BL or b562) is low-potential and absorbs at about 562 nm, and heme 2 (or BH or b566) is high-potential and absorbs at about 566 nm.</text>
</comment>
<comment type="similarity">
    <text evidence="3 4">Belongs to the cytochrome b family.</text>
</comment>
<comment type="caution">
    <text evidence="2">The full-length protein contains only eight transmembrane helices, not nine as predicted by bioinformatics tools.</text>
</comment>
<proteinExistence type="inferred from homology"/>
<feature type="chain" id="PRO_0000254993" description="Cytochrome b">
    <location>
        <begin position="1"/>
        <end position="379"/>
    </location>
</feature>
<feature type="transmembrane region" description="Helical" evidence="2">
    <location>
        <begin position="33"/>
        <end position="53"/>
    </location>
</feature>
<feature type="transmembrane region" description="Helical" evidence="2">
    <location>
        <begin position="77"/>
        <end position="98"/>
    </location>
</feature>
<feature type="transmembrane region" description="Helical" evidence="2">
    <location>
        <begin position="113"/>
        <end position="133"/>
    </location>
</feature>
<feature type="transmembrane region" description="Helical" evidence="2">
    <location>
        <begin position="178"/>
        <end position="198"/>
    </location>
</feature>
<feature type="transmembrane region" description="Helical" evidence="2">
    <location>
        <begin position="226"/>
        <end position="246"/>
    </location>
</feature>
<feature type="transmembrane region" description="Helical" evidence="2">
    <location>
        <begin position="288"/>
        <end position="308"/>
    </location>
</feature>
<feature type="transmembrane region" description="Helical" evidence="2">
    <location>
        <begin position="320"/>
        <end position="340"/>
    </location>
</feature>
<feature type="transmembrane region" description="Helical" evidence="2">
    <location>
        <begin position="347"/>
        <end position="367"/>
    </location>
</feature>
<feature type="binding site" description="axial binding residue" evidence="2">
    <location>
        <position position="83"/>
    </location>
    <ligand>
        <name>heme b</name>
        <dbReference type="ChEBI" id="CHEBI:60344"/>
        <label>b562</label>
    </ligand>
    <ligandPart>
        <name>Fe</name>
        <dbReference type="ChEBI" id="CHEBI:18248"/>
    </ligandPart>
</feature>
<feature type="binding site" description="axial binding residue" evidence="2">
    <location>
        <position position="97"/>
    </location>
    <ligand>
        <name>heme b</name>
        <dbReference type="ChEBI" id="CHEBI:60344"/>
        <label>b566</label>
    </ligand>
    <ligandPart>
        <name>Fe</name>
        <dbReference type="ChEBI" id="CHEBI:18248"/>
    </ligandPart>
</feature>
<feature type="binding site" description="axial binding residue" evidence="2">
    <location>
        <position position="182"/>
    </location>
    <ligand>
        <name>heme b</name>
        <dbReference type="ChEBI" id="CHEBI:60344"/>
        <label>b562</label>
    </ligand>
    <ligandPart>
        <name>Fe</name>
        <dbReference type="ChEBI" id="CHEBI:18248"/>
    </ligandPart>
</feature>
<feature type="binding site" description="axial binding residue" evidence="2">
    <location>
        <position position="196"/>
    </location>
    <ligand>
        <name>heme b</name>
        <dbReference type="ChEBI" id="CHEBI:60344"/>
        <label>b566</label>
    </ligand>
    <ligandPart>
        <name>Fe</name>
        <dbReference type="ChEBI" id="CHEBI:18248"/>
    </ligandPart>
</feature>
<feature type="binding site" evidence="2">
    <location>
        <position position="201"/>
    </location>
    <ligand>
        <name>a ubiquinone</name>
        <dbReference type="ChEBI" id="CHEBI:16389"/>
    </ligand>
</feature>
<sequence length="379" mass="42870">MXXXRKSHPLIKIINHSFIDLPTPSNISSWWNFGSLLGVCLGIQIITGLFLAMHYTADTSTAFSSVTHICRDVNYGWLIRYTHANGASMFFIFLYFHIGRGIYYGSYTFMETWNIGVLLLFTVMATAFMGYVLPWGQMSFWGATVITNLLSAIPYIGPTLVEWIWGGFSVDKATLTRFFAFHFILPFIITAMVMIHLLFLHETGSNNPSGINSDSDKIPFHPYYTIKDILGLMMMILILSMLILFSPDLLGDPDNYTPANPLSTPPHIKPEWYFLFAYAILRSIPNKLGGVMALVLSILILALFPVLHMSKQRSMTFRPASQCLLWILVANLIILTWIGGQPVEYPFITIGQLASISYFSIILILMPMTSLVENKLLKW</sequence>
<protein>
    <recommendedName>
        <fullName>Cytochrome b</fullName>
    </recommendedName>
    <alternativeName>
        <fullName>Complex III subunit 3</fullName>
    </alternativeName>
    <alternativeName>
        <fullName>Complex III subunit III</fullName>
    </alternativeName>
    <alternativeName>
        <fullName>Cytochrome b-c1 complex subunit 3</fullName>
    </alternativeName>
    <alternativeName>
        <fullName>Ubiquinol-cytochrome-c reductase complex cytochrome b subunit</fullName>
    </alternativeName>
</protein>